<feature type="chain" id="PRO_0000336214" description="UPF0102 protein Noc_0355">
    <location>
        <begin position="1"/>
        <end position="124"/>
    </location>
</feature>
<gene>
    <name type="ordered locus">Noc_0355</name>
</gene>
<protein>
    <recommendedName>
        <fullName evidence="1">UPF0102 protein Noc_0355</fullName>
    </recommendedName>
</protein>
<dbReference type="EMBL" id="CP000127">
    <property type="protein sequence ID" value="ABA56881.1"/>
    <property type="molecule type" value="Genomic_DNA"/>
</dbReference>
<dbReference type="RefSeq" id="WP_002814167.1">
    <property type="nucleotide sequence ID" value="NC_007484.1"/>
</dbReference>
<dbReference type="SMR" id="Q3JE65"/>
<dbReference type="FunCoup" id="Q3JE65">
    <property type="interactions" value="254"/>
</dbReference>
<dbReference type="STRING" id="323261.Noc_0355"/>
<dbReference type="KEGG" id="noc:Noc_0355"/>
<dbReference type="eggNOG" id="COG0792">
    <property type="taxonomic scope" value="Bacteria"/>
</dbReference>
<dbReference type="HOGENOM" id="CLU_115353_1_0_6"/>
<dbReference type="InParanoid" id="Q3JE65"/>
<dbReference type="Proteomes" id="UP000006838">
    <property type="component" value="Chromosome"/>
</dbReference>
<dbReference type="GO" id="GO:0003676">
    <property type="term" value="F:nucleic acid binding"/>
    <property type="evidence" value="ECO:0007669"/>
    <property type="project" value="InterPro"/>
</dbReference>
<dbReference type="Gene3D" id="3.40.1350.10">
    <property type="match status" value="1"/>
</dbReference>
<dbReference type="HAMAP" id="MF_00048">
    <property type="entry name" value="UPF0102"/>
    <property type="match status" value="1"/>
</dbReference>
<dbReference type="InterPro" id="IPR011335">
    <property type="entry name" value="Restrct_endonuc-II-like"/>
</dbReference>
<dbReference type="InterPro" id="IPR011856">
    <property type="entry name" value="tRNA_endonuc-like_dom_sf"/>
</dbReference>
<dbReference type="InterPro" id="IPR003509">
    <property type="entry name" value="UPF0102_YraN-like"/>
</dbReference>
<dbReference type="NCBIfam" id="NF009150">
    <property type="entry name" value="PRK12497.1-3"/>
    <property type="match status" value="1"/>
</dbReference>
<dbReference type="NCBIfam" id="NF009154">
    <property type="entry name" value="PRK12497.3-3"/>
    <property type="match status" value="1"/>
</dbReference>
<dbReference type="NCBIfam" id="TIGR00252">
    <property type="entry name" value="YraN family protein"/>
    <property type="match status" value="1"/>
</dbReference>
<dbReference type="PANTHER" id="PTHR34039">
    <property type="entry name" value="UPF0102 PROTEIN YRAN"/>
    <property type="match status" value="1"/>
</dbReference>
<dbReference type="PANTHER" id="PTHR34039:SF1">
    <property type="entry name" value="UPF0102 PROTEIN YRAN"/>
    <property type="match status" value="1"/>
</dbReference>
<dbReference type="Pfam" id="PF02021">
    <property type="entry name" value="UPF0102"/>
    <property type="match status" value="1"/>
</dbReference>
<dbReference type="SUPFAM" id="SSF52980">
    <property type="entry name" value="Restriction endonuclease-like"/>
    <property type="match status" value="1"/>
</dbReference>
<sequence length="124" mass="14245">MKPATHRDKGEQAEQLACHYLQARGLRLTQRNYHCRLGEIDLIMEDRESLVFIEVRYRRKGRFGDAIDSITPAKQARLIAAAQHYLQRTGGAQNKPCRFDVVGITSEKGADNIMWLRDAFRVES</sequence>
<reference key="1">
    <citation type="journal article" date="2006" name="Appl. Environ. Microbiol.">
        <title>Complete genome sequence of the marine, chemolithoautotrophic, ammonia-oxidizing bacterium Nitrosococcus oceani ATCC 19707.</title>
        <authorList>
            <person name="Klotz M.G."/>
            <person name="Arp D.J."/>
            <person name="Chain P.S.G."/>
            <person name="El-Sheikh A.F."/>
            <person name="Hauser L.J."/>
            <person name="Hommes N.G."/>
            <person name="Larimer F.W."/>
            <person name="Malfatti S.A."/>
            <person name="Norton J.M."/>
            <person name="Poret-Peterson A.T."/>
            <person name="Vergez L.M."/>
            <person name="Ward B.B."/>
        </authorList>
    </citation>
    <scope>NUCLEOTIDE SEQUENCE [LARGE SCALE GENOMIC DNA]</scope>
    <source>
        <strain>ATCC 19707 / BCRC 17464 / JCM 30415 / NCIMB 11848 / C-107</strain>
    </source>
</reference>
<evidence type="ECO:0000255" key="1">
    <source>
        <dbReference type="HAMAP-Rule" id="MF_00048"/>
    </source>
</evidence>
<organism>
    <name type="scientific">Nitrosococcus oceani (strain ATCC 19707 / BCRC 17464 / JCM 30415 / NCIMB 11848 / C-107)</name>
    <dbReference type="NCBI Taxonomy" id="323261"/>
    <lineage>
        <taxon>Bacteria</taxon>
        <taxon>Pseudomonadati</taxon>
        <taxon>Pseudomonadota</taxon>
        <taxon>Gammaproteobacteria</taxon>
        <taxon>Chromatiales</taxon>
        <taxon>Chromatiaceae</taxon>
        <taxon>Nitrosococcus</taxon>
    </lineage>
</organism>
<proteinExistence type="inferred from homology"/>
<name>Y355_NITOC</name>
<accession>Q3JE65</accession>
<keyword id="KW-1185">Reference proteome</keyword>
<comment type="similarity">
    <text evidence="1">Belongs to the UPF0102 family.</text>
</comment>